<dbReference type="EC" id="3.1.-.-" evidence="1"/>
<dbReference type="EMBL" id="AP009240">
    <property type="protein sequence ID" value="BAG78582.1"/>
    <property type="status" value="ALT_INIT"/>
    <property type="molecule type" value="Genomic_DNA"/>
</dbReference>
<dbReference type="RefSeq" id="WP_000268232.1">
    <property type="nucleotide sequence ID" value="NC_011415.1"/>
</dbReference>
<dbReference type="SMR" id="B6I6J6"/>
<dbReference type="GeneID" id="93779200"/>
<dbReference type="KEGG" id="ecy:ECSE_3058"/>
<dbReference type="HOGENOM" id="CLU_004675_1_2_6"/>
<dbReference type="Proteomes" id="UP000008199">
    <property type="component" value="Chromosome"/>
</dbReference>
<dbReference type="GO" id="GO:0008409">
    <property type="term" value="F:5'-3' exonuclease activity"/>
    <property type="evidence" value="ECO:0007669"/>
    <property type="project" value="InterPro"/>
</dbReference>
<dbReference type="GO" id="GO:0017108">
    <property type="term" value="F:5'-flap endonuclease activity"/>
    <property type="evidence" value="ECO:0007669"/>
    <property type="project" value="UniProtKB-UniRule"/>
</dbReference>
<dbReference type="GO" id="GO:0003677">
    <property type="term" value="F:DNA binding"/>
    <property type="evidence" value="ECO:0007669"/>
    <property type="project" value="UniProtKB-UniRule"/>
</dbReference>
<dbReference type="GO" id="GO:0000287">
    <property type="term" value="F:magnesium ion binding"/>
    <property type="evidence" value="ECO:0007669"/>
    <property type="project" value="UniProtKB-UniRule"/>
</dbReference>
<dbReference type="GO" id="GO:0030955">
    <property type="term" value="F:potassium ion binding"/>
    <property type="evidence" value="ECO:0007669"/>
    <property type="project" value="UniProtKB-UniRule"/>
</dbReference>
<dbReference type="GO" id="GO:0033567">
    <property type="term" value="P:DNA replication, Okazaki fragment processing"/>
    <property type="evidence" value="ECO:0007669"/>
    <property type="project" value="UniProtKB-UniRule"/>
</dbReference>
<dbReference type="CDD" id="cd09898">
    <property type="entry name" value="H3TH_53EXO"/>
    <property type="match status" value="1"/>
</dbReference>
<dbReference type="CDD" id="cd09859">
    <property type="entry name" value="PIN_53EXO"/>
    <property type="match status" value="1"/>
</dbReference>
<dbReference type="FunFam" id="1.10.150.20:FF:000003">
    <property type="entry name" value="DNA polymerase I"/>
    <property type="match status" value="1"/>
</dbReference>
<dbReference type="FunFam" id="3.40.50.1010:FF:000011">
    <property type="entry name" value="Flap endonuclease Xni"/>
    <property type="match status" value="1"/>
</dbReference>
<dbReference type="Gene3D" id="1.10.150.20">
    <property type="entry name" value="5' to 3' exonuclease, C-terminal subdomain"/>
    <property type="match status" value="1"/>
</dbReference>
<dbReference type="Gene3D" id="3.40.50.1010">
    <property type="entry name" value="5'-nuclease"/>
    <property type="match status" value="1"/>
</dbReference>
<dbReference type="HAMAP" id="MF_01192">
    <property type="entry name" value="Xni"/>
    <property type="match status" value="1"/>
</dbReference>
<dbReference type="InterPro" id="IPR020046">
    <property type="entry name" value="5-3_exonucl_a-hlix_arch_N"/>
</dbReference>
<dbReference type="InterPro" id="IPR002421">
    <property type="entry name" value="5-3_exonuclease"/>
</dbReference>
<dbReference type="InterPro" id="IPR036279">
    <property type="entry name" value="5-3_exonuclease_C_sf"/>
</dbReference>
<dbReference type="InterPro" id="IPR020045">
    <property type="entry name" value="DNA_polI_H3TH"/>
</dbReference>
<dbReference type="InterPro" id="IPR038969">
    <property type="entry name" value="FEN"/>
</dbReference>
<dbReference type="InterPro" id="IPR008918">
    <property type="entry name" value="HhH2"/>
</dbReference>
<dbReference type="InterPro" id="IPR029060">
    <property type="entry name" value="PIN-like_dom_sf"/>
</dbReference>
<dbReference type="InterPro" id="IPR022895">
    <property type="entry name" value="Xni"/>
</dbReference>
<dbReference type="NCBIfam" id="NF007017">
    <property type="entry name" value="PRK09482.1"/>
    <property type="match status" value="1"/>
</dbReference>
<dbReference type="PANTHER" id="PTHR42646:SF2">
    <property type="entry name" value="5'-3' EXONUCLEASE FAMILY PROTEIN"/>
    <property type="match status" value="1"/>
</dbReference>
<dbReference type="PANTHER" id="PTHR42646">
    <property type="entry name" value="FLAP ENDONUCLEASE XNI"/>
    <property type="match status" value="1"/>
</dbReference>
<dbReference type="Pfam" id="PF01367">
    <property type="entry name" value="5_3_exonuc"/>
    <property type="match status" value="1"/>
</dbReference>
<dbReference type="Pfam" id="PF02739">
    <property type="entry name" value="5_3_exonuc_N"/>
    <property type="match status" value="1"/>
</dbReference>
<dbReference type="SMART" id="SM00475">
    <property type="entry name" value="53EXOc"/>
    <property type="match status" value="1"/>
</dbReference>
<dbReference type="SMART" id="SM00279">
    <property type="entry name" value="HhH2"/>
    <property type="match status" value="1"/>
</dbReference>
<dbReference type="SUPFAM" id="SSF47807">
    <property type="entry name" value="5' to 3' exonuclease, C-terminal subdomain"/>
    <property type="match status" value="1"/>
</dbReference>
<dbReference type="SUPFAM" id="SSF88723">
    <property type="entry name" value="PIN domain-like"/>
    <property type="match status" value="1"/>
</dbReference>
<proteinExistence type="inferred from homology"/>
<accession>B6I6J6</accession>
<gene>
    <name evidence="1" type="primary">xni</name>
    <name evidence="1" type="synonym">ygdG</name>
    <name type="ordered locus">ECSE_3058</name>
</gene>
<organism>
    <name type="scientific">Escherichia coli (strain SE11)</name>
    <dbReference type="NCBI Taxonomy" id="409438"/>
    <lineage>
        <taxon>Bacteria</taxon>
        <taxon>Pseudomonadati</taxon>
        <taxon>Pseudomonadota</taxon>
        <taxon>Gammaproteobacteria</taxon>
        <taxon>Enterobacterales</taxon>
        <taxon>Enterobacteriaceae</taxon>
        <taxon>Escherichia</taxon>
    </lineage>
</organism>
<sequence>MAVHLLIVDALNLIRRIHAVQGSPCVETCQHALDQLIMHSQPTHAVAVFDDENRSSGWRHQRLPDYKAGRPPMPEELHDEMPALRAAFEQRGVPCWSTSGNEADDLAATLAVKVTQAGHQATIVSTDKGYCQLLSPTLRIRDYFQKRWLDAPFIDKEFGVQPQQLPDYWGLAGISSSKVPGVAGIGPKSATQLLVEFQSLEGIYENLDAVAEKWRKKLETHKEMAFLCRDIARLQTDLHIDGNLQQLRLVR</sequence>
<name>XNI_ECOSE</name>
<protein>
    <recommendedName>
        <fullName evidence="1">Flap endonuclease Xni</fullName>
        <shortName evidence="1">FEN</shortName>
        <ecNumber evidence="1">3.1.-.-</ecNumber>
    </recommendedName>
</protein>
<comment type="function">
    <text evidence="1">Has flap endonuclease activity. During DNA replication, flap endonucleases cleave the 5'-overhanging flap structure that is generated by displacement synthesis when DNA polymerase encounters the 5'-end of a downstream Okazaki fragment.</text>
</comment>
<comment type="cofactor">
    <cofactor evidence="1">
        <name>Mg(2+)</name>
        <dbReference type="ChEBI" id="CHEBI:18420"/>
    </cofactor>
    <text evidence="1">Binds 2 Mg(2+) per subunit. Only one magnesium ion has a direct interaction with the protein, the other interactions are indirect.</text>
</comment>
<comment type="cofactor">
    <cofactor evidence="1">
        <name>K(+)</name>
        <dbReference type="ChEBI" id="CHEBI:29103"/>
    </cofactor>
    <text evidence="1">Binds 1 K(+) per subunit. The potassium ion strongly increases the affinity for DNA.</text>
</comment>
<comment type="similarity">
    <text evidence="1">Belongs to the Xni family.</text>
</comment>
<comment type="sequence caution" evidence="2">
    <conflict type="erroneous initiation">
        <sequence resource="EMBL-CDS" id="BAG78582"/>
    </conflict>
    <text>Extended N-terminus.</text>
</comment>
<feature type="chain" id="PRO_1000138383" description="Flap endonuclease Xni">
    <location>
        <begin position="1"/>
        <end position="251"/>
    </location>
</feature>
<feature type="domain" description="5'-3' exonuclease" evidence="1">
    <location>
        <begin position="160"/>
        <end position="249"/>
    </location>
</feature>
<feature type="region of interest" description="Interaction with DNA" evidence="1">
    <location>
        <begin position="184"/>
        <end position="189"/>
    </location>
</feature>
<feature type="binding site" evidence="1">
    <location>
        <position position="104"/>
    </location>
    <ligand>
        <name>Mg(2+)</name>
        <dbReference type="ChEBI" id="CHEBI:18420"/>
    </ligand>
</feature>
<feature type="binding site" evidence="1">
    <location>
        <position position="171"/>
    </location>
    <ligand>
        <name>K(+)</name>
        <dbReference type="ChEBI" id="CHEBI:29103"/>
    </ligand>
</feature>
<feature type="binding site" evidence="1">
    <location>
        <position position="172"/>
    </location>
    <ligand>
        <name>K(+)</name>
        <dbReference type="ChEBI" id="CHEBI:29103"/>
    </ligand>
</feature>
<feature type="binding site" evidence="1">
    <location>
        <position position="180"/>
    </location>
    <ligand>
        <name>K(+)</name>
        <dbReference type="ChEBI" id="CHEBI:29103"/>
    </ligand>
</feature>
<feature type="binding site" evidence="1">
    <location>
        <position position="182"/>
    </location>
    <ligand>
        <name>K(+)</name>
        <dbReference type="ChEBI" id="CHEBI:29103"/>
    </ligand>
</feature>
<feature type="binding site" evidence="1">
    <location>
        <position position="185"/>
    </location>
    <ligand>
        <name>K(+)</name>
        <dbReference type="ChEBI" id="CHEBI:29103"/>
    </ligand>
</feature>
<evidence type="ECO:0000255" key="1">
    <source>
        <dbReference type="HAMAP-Rule" id="MF_01192"/>
    </source>
</evidence>
<evidence type="ECO:0000305" key="2"/>
<keyword id="KW-0238">DNA-binding</keyword>
<keyword id="KW-0255">Endonuclease</keyword>
<keyword id="KW-0378">Hydrolase</keyword>
<keyword id="KW-0460">Magnesium</keyword>
<keyword id="KW-0479">Metal-binding</keyword>
<keyword id="KW-0540">Nuclease</keyword>
<keyword id="KW-0630">Potassium</keyword>
<reference key="1">
    <citation type="journal article" date="2008" name="DNA Res.">
        <title>Complete genome sequence and comparative analysis of the wild-type commensal Escherichia coli strain SE11 isolated from a healthy adult.</title>
        <authorList>
            <person name="Oshima K."/>
            <person name="Toh H."/>
            <person name="Ogura Y."/>
            <person name="Sasamoto H."/>
            <person name="Morita H."/>
            <person name="Park S.-H."/>
            <person name="Ooka T."/>
            <person name="Iyoda S."/>
            <person name="Taylor T.D."/>
            <person name="Hayashi T."/>
            <person name="Itoh K."/>
            <person name="Hattori M."/>
        </authorList>
    </citation>
    <scope>NUCLEOTIDE SEQUENCE [LARGE SCALE GENOMIC DNA]</scope>
    <source>
        <strain>SE11</strain>
    </source>
</reference>